<proteinExistence type="evidence at transcript level"/>
<protein>
    <recommendedName>
        <fullName evidence="3">Glycerol-3-phosphate acyltransferase 1, mitochondrial</fullName>
        <shortName evidence="3">GPAT-1</shortName>
        <ecNumber evidence="3">2.3.1.15</ecNumber>
    </recommendedName>
</protein>
<keyword id="KW-0007">Acetylation</keyword>
<keyword id="KW-0012">Acyltransferase</keyword>
<keyword id="KW-0444">Lipid biosynthesis</keyword>
<keyword id="KW-0443">Lipid metabolism</keyword>
<keyword id="KW-0472">Membrane</keyword>
<keyword id="KW-0496">Mitochondrion</keyword>
<keyword id="KW-1000">Mitochondrion outer membrane</keyword>
<keyword id="KW-0594">Phospholipid biosynthesis</keyword>
<keyword id="KW-1208">Phospholipid metabolism</keyword>
<keyword id="KW-0597">Phosphoprotein</keyword>
<keyword id="KW-1185">Reference proteome</keyword>
<keyword id="KW-0808">Transferase</keyword>
<sequence>MDESALTLGTIDVSYLPNSSEYSIGRCKHASEEWGECGFRPPVFRSATLKWKESLMSRKRPFVGRCCYSCTPQSWDRFFNPSIPSLGLRNVIYINETHTRHRGWLARRLSYVLFIQERDVHKGMFATNVTENVLNSSRVQEAIAEVAAELNPDGSAQQQSKAVNKVKKKAKKILQEMVATVSPAMIRLTGWVLLKLFNSFFWNIQIHKGQLEMVKAATEMNLPLIFLPVHRSHIDYLLLTFILFCHNIKAPYIASGNNLNIPIFSTLIHKLGGFFIRRRLDETPDGQKDILYRALLHGHIVELLRQQQFLEIFLEGTRSRSGKTSCARAGLLSVVVDTLSTNTIPDILIIPVGISYDRIIEGHYNGEQLGKPKKNESLWSVARGVIRMLRKNYGCVRVDFAQPFSLKEYLESQSQKPVSAPLSLEQALLPAILPSRPSDAVDEGTDMSINESRNAADESFRRRLIANLAEHILFTASKSCAIMSTHIVACLLLYRHRQGIDLSTLVEDFFVMKEEVLARDFDLGFSGNSEDVVMHAIQLLGNCITITHTSRNDEFFITPSTTVPSVFELNFYSNGVLHVFIMEAIIACSLYAVLKKRGSGGPASPSLISQEQLVRKAASLCYLLSNEGTISLPCQTFYQICHETVGRFIQYGILTVAEQDDQEDISPSLAEQHWDKKLPEPLSWRSDEEDEDSDFGEEQRDCYLKVSQSKEHQQFITFLQRLLGPLLEAYSSAAIFIHNFSGPVPEPEYLQKLHKYLINRTERRVAVYAESATYCLVKNAVKMFKDIGVFKETKQKKVSVLELSSTFLPQCNRQKLLEYILSFVVL</sequence>
<feature type="chain" id="PRO_0000433928" description="Glycerol-3-phosphate acyltransferase 1, mitochondrial">
    <location>
        <begin position="1"/>
        <end position="826"/>
    </location>
</feature>
<feature type="topological domain" description="Cytoplasmic" evidence="3">
    <location>
        <begin position="1"/>
        <end position="87"/>
    </location>
</feature>
<feature type="intramembrane region" evidence="3">
    <location>
        <begin position="88"/>
        <end position="118"/>
    </location>
</feature>
<feature type="topological domain" description="Cytoplasmic" evidence="3">
    <location>
        <begin position="119"/>
        <end position="826"/>
    </location>
</feature>
<feature type="region of interest" description="Important for mitochondrial localization" evidence="3">
    <location>
        <begin position="80"/>
        <end position="120"/>
    </location>
</feature>
<feature type="short sequence motif" description="HXXXXD motif" evidence="3">
    <location>
        <begin position="230"/>
        <end position="235"/>
    </location>
</feature>
<feature type="binding site" evidence="3">
    <location>
        <position position="278"/>
    </location>
    <ligand>
        <name>CoA</name>
        <dbReference type="ChEBI" id="CHEBI:57287"/>
    </ligand>
</feature>
<feature type="binding site" evidence="3">
    <location>
        <position position="279"/>
    </location>
    <ligand>
        <name>CoA</name>
        <dbReference type="ChEBI" id="CHEBI:57287"/>
    </ligand>
</feature>
<feature type="binding site" evidence="3">
    <location>
        <position position="288"/>
    </location>
    <ligand>
        <name>CoA</name>
        <dbReference type="ChEBI" id="CHEBI:57287"/>
    </ligand>
</feature>
<feature type="binding site" evidence="3">
    <location>
        <position position="293"/>
    </location>
    <ligand>
        <name>CoA</name>
        <dbReference type="ChEBI" id="CHEBI:57287"/>
    </ligand>
</feature>
<feature type="binding site" evidence="3">
    <location>
        <position position="328"/>
    </location>
    <ligand>
        <name>CoA</name>
        <dbReference type="ChEBI" id="CHEBI:57287"/>
    </ligand>
</feature>
<feature type="binding site" evidence="3">
    <location>
        <position position="462"/>
    </location>
    <ligand>
        <name>CoA</name>
        <dbReference type="ChEBI" id="CHEBI:57287"/>
    </ligand>
</feature>
<feature type="modified residue" description="Phosphoserine" evidence="1">
    <location>
        <position position="380"/>
    </location>
</feature>
<feature type="modified residue" description="Phosphoserine" evidence="2">
    <location>
        <position position="686"/>
    </location>
</feature>
<feature type="modified residue" description="Phosphoserine" evidence="3">
    <location>
        <position position="693"/>
    </location>
</feature>
<feature type="modified residue" description="N6-acetyllysine" evidence="2">
    <location>
        <position position="778"/>
    </location>
</feature>
<feature type="modified residue" description="N6-acetyllysine" evidence="2">
    <location>
        <position position="782"/>
    </location>
</feature>
<organism>
    <name type="scientific">Sus scrofa</name>
    <name type="common">Pig</name>
    <dbReference type="NCBI Taxonomy" id="9823"/>
    <lineage>
        <taxon>Eukaryota</taxon>
        <taxon>Metazoa</taxon>
        <taxon>Chordata</taxon>
        <taxon>Craniata</taxon>
        <taxon>Vertebrata</taxon>
        <taxon>Euteleostomi</taxon>
        <taxon>Mammalia</taxon>
        <taxon>Eutheria</taxon>
        <taxon>Laurasiatheria</taxon>
        <taxon>Artiodactyla</taxon>
        <taxon>Suina</taxon>
        <taxon>Suidae</taxon>
        <taxon>Sus</taxon>
    </lineage>
</organism>
<comment type="function">
    <text evidence="3">Mitochondrial membrane protein that catalyzes the essential first step of biosynthesis of glycerolipids such as triglycerides, phosphatidic acids and lysophosphatidic acids (By similarity). Esterifies acyl-group from acyl-coenzyme A (acyl-CoA) to the sn-1 position of glycerol-3-phosphate, to produce lysophosphatidic acid (By similarity). Has a narrow hydrophobic binding cleft that selects for a linear acyl chain (By similarity). Catalytic activity is higher for substrates with a 16-carbon acyl chain (By similarity).</text>
</comment>
<comment type="catalytic activity">
    <reaction evidence="3">
        <text>sn-glycerol 3-phosphate + an acyl-CoA = a 1-acyl-sn-glycero-3-phosphate + CoA</text>
        <dbReference type="Rhea" id="RHEA:15325"/>
        <dbReference type="ChEBI" id="CHEBI:57287"/>
        <dbReference type="ChEBI" id="CHEBI:57597"/>
        <dbReference type="ChEBI" id="CHEBI:57970"/>
        <dbReference type="ChEBI" id="CHEBI:58342"/>
        <dbReference type="EC" id="2.3.1.15"/>
    </reaction>
    <physiologicalReaction direction="left-to-right" evidence="3">
        <dbReference type="Rhea" id="RHEA:15326"/>
    </physiologicalReaction>
</comment>
<comment type="catalytic activity">
    <reaction evidence="3">
        <text>(9Z,12Z)-octadecadienoyl-CoA + sn-glycerol 3-phosphate = 1-(9Z,12Z)-octadecadienoyl-sn-glycero-3-phosphate + CoA</text>
        <dbReference type="Rhea" id="RHEA:37203"/>
        <dbReference type="ChEBI" id="CHEBI:57287"/>
        <dbReference type="ChEBI" id="CHEBI:57383"/>
        <dbReference type="ChEBI" id="CHEBI:57597"/>
        <dbReference type="ChEBI" id="CHEBI:74547"/>
    </reaction>
    <physiologicalReaction direction="left-to-right" evidence="3">
        <dbReference type="Rhea" id="RHEA:37204"/>
    </physiologicalReaction>
</comment>
<comment type="catalytic activity">
    <reaction evidence="3">
        <text>sn-glycerol 3-phosphate + (9Z)-octadecenoyl-CoA = 1-(9Z-octadecenoyl)-sn-glycero-3-phosphate + CoA</text>
        <dbReference type="Rhea" id="RHEA:37199"/>
        <dbReference type="ChEBI" id="CHEBI:57287"/>
        <dbReference type="ChEBI" id="CHEBI:57387"/>
        <dbReference type="ChEBI" id="CHEBI:57597"/>
        <dbReference type="ChEBI" id="CHEBI:74544"/>
    </reaction>
    <physiologicalReaction direction="left-to-right" evidence="3">
        <dbReference type="Rhea" id="RHEA:37200"/>
    </physiologicalReaction>
</comment>
<comment type="catalytic activity">
    <reaction evidence="3">
        <text>sn-glycerol 3-phosphate + octadecanoyl-CoA = 1-octadecanoyl-sn-glycero-3-phosphate + CoA</text>
        <dbReference type="Rhea" id="RHEA:37195"/>
        <dbReference type="ChEBI" id="CHEBI:57287"/>
        <dbReference type="ChEBI" id="CHEBI:57394"/>
        <dbReference type="ChEBI" id="CHEBI:57597"/>
        <dbReference type="ChEBI" id="CHEBI:74565"/>
    </reaction>
    <physiologicalReaction direction="left-to-right" evidence="3">
        <dbReference type="Rhea" id="RHEA:37196"/>
    </physiologicalReaction>
</comment>
<comment type="catalytic activity">
    <reaction evidence="3">
        <text>sn-glycerol 3-phosphate + hexadecanoyl-CoA = 1-hexadecanoyl-sn-glycero-3-phosphate + CoA</text>
        <dbReference type="Rhea" id="RHEA:35723"/>
        <dbReference type="ChEBI" id="CHEBI:57287"/>
        <dbReference type="ChEBI" id="CHEBI:57379"/>
        <dbReference type="ChEBI" id="CHEBI:57518"/>
        <dbReference type="ChEBI" id="CHEBI:57597"/>
    </reaction>
    <physiologicalReaction direction="left-to-right" evidence="3">
        <dbReference type="Rhea" id="RHEA:35724"/>
    </physiologicalReaction>
</comment>
<comment type="catalytic activity">
    <reaction evidence="3">
        <text>dodecanoyl-CoA + sn-glycerol 3-phosphate = 1-dodecanoyl-sn-glycerol 3-phosphate + CoA</text>
        <dbReference type="Rhea" id="RHEA:35727"/>
        <dbReference type="ChEBI" id="CHEBI:57287"/>
        <dbReference type="ChEBI" id="CHEBI:57375"/>
        <dbReference type="ChEBI" id="CHEBI:57597"/>
        <dbReference type="ChEBI" id="CHEBI:72682"/>
    </reaction>
    <physiologicalReaction direction="left-to-right" evidence="3">
        <dbReference type="Rhea" id="RHEA:35728"/>
    </physiologicalReaction>
</comment>
<comment type="catalytic activity">
    <reaction evidence="3">
        <text>1-acyl-sn-glycero-3-phospho-(1'-sn-glycerol) + an acyl-CoA = a 1,2-diacyl-sn-glycero-3-phospho-(1'-sn-glycerol) + CoA</text>
        <dbReference type="Rhea" id="RHEA:33203"/>
        <dbReference type="ChEBI" id="CHEBI:57287"/>
        <dbReference type="ChEBI" id="CHEBI:58342"/>
        <dbReference type="ChEBI" id="CHEBI:64716"/>
        <dbReference type="ChEBI" id="CHEBI:64840"/>
    </reaction>
    <physiologicalReaction direction="left-to-right" evidence="3">
        <dbReference type="Rhea" id="RHEA:33204"/>
    </physiologicalReaction>
</comment>
<comment type="pathway">
    <text evidence="3">Phospholipid metabolism; CDP-diacylglycerol biosynthesis; CDP-diacylglycerol from sn-glycerol 3-phosphate: step 1/3.</text>
</comment>
<comment type="subcellular location">
    <subcellularLocation>
        <location evidence="3">Mitochondrion outer membrane</location>
        <topology evidence="3">Peripheral membrane protein</topology>
    </subcellularLocation>
    <text evidence="3">Associated with the mitochondrion outer membrane of hepatic cells via a patch of basic residues.</text>
</comment>
<comment type="domain">
    <text evidence="3">The HXXXXD motif is essential for acyltransferase activity and contributes to the binding of the cysteamine moiety of the acyl-CoA and the phosphate moiety of the glycerol-3-phosphate.</text>
</comment>
<comment type="similarity">
    <text evidence="4">Belongs to the GPAT/DAPAT family.</text>
</comment>
<evidence type="ECO:0000250" key="1">
    <source>
        <dbReference type="UniProtKB" id="P97564"/>
    </source>
</evidence>
<evidence type="ECO:0000250" key="2">
    <source>
        <dbReference type="UniProtKB" id="Q61586"/>
    </source>
</evidence>
<evidence type="ECO:0000250" key="3">
    <source>
        <dbReference type="UniProtKB" id="Q9HCL2"/>
    </source>
</evidence>
<evidence type="ECO:0000305" key="4"/>
<accession>F1S5L4</accession>
<accession>Q7YS07</accession>
<dbReference type="EC" id="2.3.1.15" evidence="3"/>
<dbReference type="EMBL" id="AY284842">
    <property type="protein sequence ID" value="AAP74372.1"/>
    <property type="molecule type" value="mRNA"/>
</dbReference>
<dbReference type="EMBL" id="CT737200">
    <property type="status" value="NOT_ANNOTATED_CDS"/>
    <property type="molecule type" value="Genomic_DNA"/>
</dbReference>
<dbReference type="EMBL" id="CT827870">
    <property type="status" value="NOT_ANNOTATED_CDS"/>
    <property type="molecule type" value="Genomic_DNA"/>
</dbReference>
<dbReference type="RefSeq" id="XP_001927910.1">
    <property type="nucleotide sequence ID" value="XM_001927875.3"/>
</dbReference>
<dbReference type="RefSeq" id="XP_005671519.1">
    <property type="nucleotide sequence ID" value="XM_005671462.2"/>
</dbReference>
<dbReference type="RefSeq" id="XP_005671520.1">
    <property type="nucleotide sequence ID" value="XM_005671463.2"/>
</dbReference>
<dbReference type="SMR" id="F1S5L4"/>
<dbReference type="FunCoup" id="F1S5L4">
    <property type="interactions" value="319"/>
</dbReference>
<dbReference type="STRING" id="9823.ENSSSCP00000011325"/>
<dbReference type="PaxDb" id="9823-ENSSSCP00000011325"/>
<dbReference type="Ensembl" id="ENSSSCT00045023945.1">
    <property type="protein sequence ID" value="ENSSSCP00045016515.1"/>
    <property type="gene ID" value="ENSSSCG00045014059.1"/>
</dbReference>
<dbReference type="Ensembl" id="ENSSSCT00050045061.1">
    <property type="protein sequence ID" value="ENSSSCP00050018517.1"/>
    <property type="gene ID" value="ENSSSCG00050033629.1"/>
</dbReference>
<dbReference type="Ensembl" id="ENSSSCT00110033266">
    <property type="protein sequence ID" value="ENSSSCP00110022458"/>
    <property type="gene ID" value="ENSSSCG00110017505"/>
</dbReference>
<dbReference type="Ensembl" id="ENSSSCT00115008405">
    <property type="protein sequence ID" value="ENSSSCP00115007892"/>
    <property type="gene ID" value="ENSSSCG00115004875"/>
</dbReference>
<dbReference type="Ensembl" id="ENSSSCT00130026022">
    <property type="protein sequence ID" value="ENSSSCP00130021037"/>
    <property type="gene ID" value="ENSSSCG00130015309"/>
</dbReference>
<dbReference type="GeneID" id="397629"/>
<dbReference type="KEGG" id="ssc:397629"/>
<dbReference type="CTD" id="57678"/>
<dbReference type="eggNOG" id="KOG3729">
    <property type="taxonomic scope" value="Eukaryota"/>
</dbReference>
<dbReference type="HOGENOM" id="CLU_016910_1_1_1"/>
<dbReference type="InParanoid" id="F1S5L4"/>
<dbReference type="OrthoDB" id="5962536at2759"/>
<dbReference type="TreeFam" id="TF313360"/>
<dbReference type="Reactome" id="R-SSC-1483166">
    <property type="pathway name" value="Synthesis of PA"/>
</dbReference>
<dbReference type="Reactome" id="R-SSC-75109">
    <property type="pathway name" value="Triglyceride biosynthesis"/>
</dbReference>
<dbReference type="UniPathway" id="UPA00557">
    <property type="reaction ID" value="UER00612"/>
</dbReference>
<dbReference type="Proteomes" id="UP000008227">
    <property type="component" value="Unplaced"/>
</dbReference>
<dbReference type="Proteomes" id="UP000314985">
    <property type="component" value="Unplaced"/>
</dbReference>
<dbReference type="Proteomes" id="UP000694570">
    <property type="component" value="Unplaced"/>
</dbReference>
<dbReference type="Proteomes" id="UP000694571">
    <property type="component" value="Unplaced"/>
</dbReference>
<dbReference type="Proteomes" id="UP000694720">
    <property type="component" value="Unplaced"/>
</dbReference>
<dbReference type="Proteomes" id="UP000694722">
    <property type="component" value="Unplaced"/>
</dbReference>
<dbReference type="Proteomes" id="UP000694723">
    <property type="component" value="Unplaced"/>
</dbReference>
<dbReference type="Proteomes" id="UP000694724">
    <property type="component" value="Unplaced"/>
</dbReference>
<dbReference type="Proteomes" id="UP000694725">
    <property type="component" value="Unplaced"/>
</dbReference>
<dbReference type="Proteomes" id="UP000694726">
    <property type="component" value="Unplaced"/>
</dbReference>
<dbReference type="Proteomes" id="UP000694727">
    <property type="component" value="Unplaced"/>
</dbReference>
<dbReference type="Proteomes" id="UP000694728">
    <property type="component" value="Unplaced"/>
</dbReference>
<dbReference type="GO" id="GO:0005741">
    <property type="term" value="C:mitochondrial outer membrane"/>
    <property type="evidence" value="ECO:0007669"/>
    <property type="project" value="UniProtKB-SubCell"/>
</dbReference>
<dbReference type="GO" id="GO:0005739">
    <property type="term" value="C:mitochondrion"/>
    <property type="evidence" value="ECO:0000318"/>
    <property type="project" value="GO_Central"/>
</dbReference>
<dbReference type="GO" id="GO:0005886">
    <property type="term" value="C:plasma membrane"/>
    <property type="evidence" value="ECO:0007669"/>
    <property type="project" value="InterPro"/>
</dbReference>
<dbReference type="GO" id="GO:0004366">
    <property type="term" value="F:glycerol-3-phosphate O-acyltransferase activity"/>
    <property type="evidence" value="ECO:0000250"/>
    <property type="project" value="UniProtKB"/>
</dbReference>
<dbReference type="GO" id="GO:0016024">
    <property type="term" value="P:CDP-diacylglycerol biosynthetic process"/>
    <property type="evidence" value="ECO:0007669"/>
    <property type="project" value="UniProtKB-UniPathway"/>
</dbReference>
<dbReference type="GO" id="GO:0006651">
    <property type="term" value="P:diacylglycerol biosynthetic process"/>
    <property type="evidence" value="ECO:0000250"/>
    <property type="project" value="UniProtKB"/>
</dbReference>
<dbReference type="GO" id="GO:0006650">
    <property type="term" value="P:glycerophospholipid metabolic process"/>
    <property type="evidence" value="ECO:0000318"/>
    <property type="project" value="GO_Central"/>
</dbReference>
<dbReference type="GO" id="GO:0006654">
    <property type="term" value="P:phosphatidic acid biosynthetic process"/>
    <property type="evidence" value="ECO:0000250"/>
    <property type="project" value="UniProtKB"/>
</dbReference>
<dbReference type="GO" id="GO:0006655">
    <property type="term" value="P:phosphatidylglycerol biosynthetic process"/>
    <property type="evidence" value="ECO:0000250"/>
    <property type="project" value="UniProtKB"/>
</dbReference>
<dbReference type="GO" id="GO:0019432">
    <property type="term" value="P:triglyceride biosynthetic process"/>
    <property type="evidence" value="ECO:0000318"/>
    <property type="project" value="GO_Central"/>
</dbReference>
<dbReference type="CDD" id="cd07993">
    <property type="entry name" value="LPLAT_DHAPAT-like"/>
    <property type="match status" value="1"/>
</dbReference>
<dbReference type="InterPro" id="IPR022284">
    <property type="entry name" value="GPAT/DHAPAT"/>
</dbReference>
<dbReference type="InterPro" id="IPR045520">
    <property type="entry name" value="GPAT/DHAPAT_C"/>
</dbReference>
<dbReference type="InterPro" id="IPR041728">
    <property type="entry name" value="GPAT/DHAPAT_LPLAT"/>
</dbReference>
<dbReference type="InterPro" id="IPR028354">
    <property type="entry name" value="GPAT_PlsB"/>
</dbReference>
<dbReference type="InterPro" id="IPR002123">
    <property type="entry name" value="Plipid/glycerol_acylTrfase"/>
</dbReference>
<dbReference type="PANTHER" id="PTHR12563">
    <property type="entry name" value="GLYCEROL-3-PHOSPHATE ACYLTRANSFERASE"/>
    <property type="match status" value="1"/>
</dbReference>
<dbReference type="PANTHER" id="PTHR12563:SF16">
    <property type="entry name" value="GLYCEROL-3-PHOSPHATE ACYLTRANSFERASE 1, MITOCHONDRIAL"/>
    <property type="match status" value="1"/>
</dbReference>
<dbReference type="Pfam" id="PF01553">
    <property type="entry name" value="Acyltransferase"/>
    <property type="match status" value="1"/>
</dbReference>
<dbReference type="Pfam" id="PF19277">
    <property type="entry name" value="GPAT_C"/>
    <property type="match status" value="1"/>
</dbReference>
<dbReference type="PIRSF" id="PIRSF500064">
    <property type="entry name" value="GPAT"/>
    <property type="match status" value="1"/>
</dbReference>
<dbReference type="PIRSF" id="PIRSF000437">
    <property type="entry name" value="GPAT_DHAPAT"/>
    <property type="match status" value="1"/>
</dbReference>
<dbReference type="SMART" id="SM00563">
    <property type="entry name" value="PlsC"/>
    <property type="match status" value="1"/>
</dbReference>
<dbReference type="SUPFAM" id="SSF69593">
    <property type="entry name" value="Glycerol-3-phosphate (1)-acyltransferase"/>
    <property type="match status" value="1"/>
</dbReference>
<reference key="1">
    <citation type="journal article" date="2003" name="Anim. Genet.">
        <title>Assignment of the mitochondrial glycerol-3-phosphate acyltransferase (GPAT) gene to porcine chromosome 14.</title>
        <authorList>
            <person name="Tomas A."/>
            <person name="Estelle J."/>
            <person name="Clop A."/>
            <person name="Gomez-Raya L."/>
            <person name="Noguera J.L."/>
            <person name="Sanchez A."/>
            <person name="Amills M."/>
        </authorList>
    </citation>
    <scope>NUCLEOTIDE SEQUENCE [MRNA] OF 528-826</scope>
    <source>
        <tissue>Liver</tissue>
    </source>
</reference>
<reference key="2">
    <citation type="submission" date="2009-11" db="EMBL/GenBank/DDBJ databases">
        <authorList>
            <consortium name="Porcine genome sequencing project"/>
        </authorList>
    </citation>
    <scope>NUCLEOTIDE SEQUENCE [LARGE SCALE GENOMIC DNA]</scope>
</reference>
<name>GPAT1_PIG</name>
<gene>
    <name evidence="3" type="primary">GPAM</name>
    <name type="synonym">GPAT</name>
    <name evidence="3" type="synonym">GPAT1</name>
</gene>